<dbReference type="EC" id="1.3.3.3" evidence="1"/>
<dbReference type="EMBL" id="CP000270">
    <property type="protein sequence ID" value="ABE29721.1"/>
    <property type="molecule type" value="Genomic_DNA"/>
</dbReference>
<dbReference type="RefSeq" id="WP_011487454.1">
    <property type="nucleotide sequence ID" value="NC_007951.1"/>
</dbReference>
<dbReference type="SMR" id="Q142L8"/>
<dbReference type="STRING" id="266265.Bxe_A3261"/>
<dbReference type="KEGG" id="bxb:DR64_964"/>
<dbReference type="KEGG" id="bxe:Bxe_A3261"/>
<dbReference type="PATRIC" id="fig|266265.5.peg.1219"/>
<dbReference type="eggNOG" id="COG0408">
    <property type="taxonomic scope" value="Bacteria"/>
</dbReference>
<dbReference type="OrthoDB" id="9777553at2"/>
<dbReference type="UniPathway" id="UPA00251">
    <property type="reaction ID" value="UER00322"/>
</dbReference>
<dbReference type="Proteomes" id="UP000001817">
    <property type="component" value="Chromosome 1"/>
</dbReference>
<dbReference type="GO" id="GO:0005737">
    <property type="term" value="C:cytoplasm"/>
    <property type="evidence" value="ECO:0007669"/>
    <property type="project" value="UniProtKB-SubCell"/>
</dbReference>
<dbReference type="GO" id="GO:0004109">
    <property type="term" value="F:coproporphyrinogen oxidase activity"/>
    <property type="evidence" value="ECO:0007669"/>
    <property type="project" value="UniProtKB-UniRule"/>
</dbReference>
<dbReference type="GO" id="GO:0046872">
    <property type="term" value="F:metal ion binding"/>
    <property type="evidence" value="ECO:0007669"/>
    <property type="project" value="UniProtKB-KW"/>
</dbReference>
<dbReference type="GO" id="GO:0042803">
    <property type="term" value="F:protein homodimerization activity"/>
    <property type="evidence" value="ECO:0000250"/>
    <property type="project" value="UniProtKB"/>
</dbReference>
<dbReference type="GO" id="GO:0006782">
    <property type="term" value="P:protoporphyrinogen IX biosynthetic process"/>
    <property type="evidence" value="ECO:0007669"/>
    <property type="project" value="UniProtKB-UniRule"/>
</dbReference>
<dbReference type="FunFam" id="3.40.1500.10:FF:000001">
    <property type="entry name" value="Oxygen-dependent coproporphyrinogen-III oxidase"/>
    <property type="match status" value="1"/>
</dbReference>
<dbReference type="Gene3D" id="3.40.1500.10">
    <property type="entry name" value="Coproporphyrinogen III oxidase, aerobic"/>
    <property type="match status" value="1"/>
</dbReference>
<dbReference type="HAMAP" id="MF_00333">
    <property type="entry name" value="Coprogen_oxidas"/>
    <property type="match status" value="1"/>
</dbReference>
<dbReference type="InterPro" id="IPR001260">
    <property type="entry name" value="Coprogen_oxidase_aer"/>
</dbReference>
<dbReference type="InterPro" id="IPR036406">
    <property type="entry name" value="Coprogen_oxidase_aer_sf"/>
</dbReference>
<dbReference type="InterPro" id="IPR018375">
    <property type="entry name" value="Coprogen_oxidase_CS"/>
</dbReference>
<dbReference type="NCBIfam" id="NF003727">
    <property type="entry name" value="PRK05330.1"/>
    <property type="match status" value="1"/>
</dbReference>
<dbReference type="PANTHER" id="PTHR10755">
    <property type="entry name" value="COPROPORPHYRINOGEN III OXIDASE, MITOCHONDRIAL"/>
    <property type="match status" value="1"/>
</dbReference>
<dbReference type="PANTHER" id="PTHR10755:SF0">
    <property type="entry name" value="OXYGEN-DEPENDENT COPROPORPHYRINOGEN-III OXIDASE, MITOCHONDRIAL"/>
    <property type="match status" value="1"/>
</dbReference>
<dbReference type="Pfam" id="PF01218">
    <property type="entry name" value="Coprogen_oxidas"/>
    <property type="match status" value="1"/>
</dbReference>
<dbReference type="PIRSF" id="PIRSF000166">
    <property type="entry name" value="Coproporphyri_ox"/>
    <property type="match status" value="1"/>
</dbReference>
<dbReference type="PRINTS" id="PR00073">
    <property type="entry name" value="COPRGNOXDASE"/>
</dbReference>
<dbReference type="SUPFAM" id="SSF102886">
    <property type="entry name" value="Coproporphyrinogen III oxidase"/>
    <property type="match status" value="1"/>
</dbReference>
<dbReference type="PROSITE" id="PS01021">
    <property type="entry name" value="COPROGEN_OXIDASE"/>
    <property type="match status" value="1"/>
</dbReference>
<accession>Q142L8</accession>
<feature type="chain" id="PRO_1000019464" description="Oxygen-dependent coproporphyrinogen-III oxidase">
    <location>
        <begin position="1"/>
        <end position="307"/>
    </location>
</feature>
<feature type="region of interest" description="Important for dimerization" evidence="1">
    <location>
        <begin position="247"/>
        <end position="282"/>
    </location>
</feature>
<feature type="active site" description="Proton donor" evidence="1">
    <location>
        <position position="113"/>
    </location>
</feature>
<feature type="binding site" evidence="1">
    <location>
        <position position="99"/>
    </location>
    <ligand>
        <name>substrate</name>
    </ligand>
</feature>
<feature type="binding site" evidence="1">
    <location>
        <position position="103"/>
    </location>
    <ligand>
        <name>a divalent metal cation</name>
        <dbReference type="ChEBI" id="CHEBI:60240"/>
    </ligand>
</feature>
<feature type="binding site" evidence="1">
    <location>
        <position position="113"/>
    </location>
    <ligand>
        <name>a divalent metal cation</name>
        <dbReference type="ChEBI" id="CHEBI:60240"/>
    </ligand>
</feature>
<feature type="binding site" evidence="1">
    <location>
        <begin position="115"/>
        <end position="117"/>
    </location>
    <ligand>
        <name>substrate</name>
    </ligand>
</feature>
<feature type="binding site" evidence="1">
    <location>
        <position position="152"/>
    </location>
    <ligand>
        <name>a divalent metal cation</name>
        <dbReference type="ChEBI" id="CHEBI:60240"/>
    </ligand>
</feature>
<feature type="binding site" evidence="1">
    <location>
        <position position="182"/>
    </location>
    <ligand>
        <name>a divalent metal cation</name>
        <dbReference type="ChEBI" id="CHEBI:60240"/>
    </ligand>
</feature>
<feature type="binding site" evidence="1">
    <location>
        <begin position="265"/>
        <end position="267"/>
    </location>
    <ligand>
        <name>substrate</name>
    </ligand>
</feature>
<feature type="site" description="Important for dimerization" evidence="1">
    <location>
        <position position="182"/>
    </location>
</feature>
<protein>
    <recommendedName>
        <fullName evidence="1">Oxygen-dependent coproporphyrinogen-III oxidase</fullName>
        <shortName evidence="1">CPO</shortName>
        <shortName evidence="1">Coprogen oxidase</shortName>
        <shortName evidence="1">Coproporphyrinogenase</shortName>
        <ecNumber evidence="1">1.3.3.3</ecNumber>
    </recommendedName>
</protein>
<comment type="function">
    <text evidence="1">Involved in the heme biosynthesis. Catalyzes the aerobic oxidative decarboxylation of propionate groups of rings A and B of coproporphyrinogen-III to yield the vinyl groups in protoporphyrinogen-IX.</text>
</comment>
<comment type="catalytic activity">
    <reaction evidence="1">
        <text>coproporphyrinogen III + O2 + 2 H(+) = protoporphyrinogen IX + 2 CO2 + 2 H2O</text>
        <dbReference type="Rhea" id="RHEA:18257"/>
        <dbReference type="ChEBI" id="CHEBI:15377"/>
        <dbReference type="ChEBI" id="CHEBI:15378"/>
        <dbReference type="ChEBI" id="CHEBI:15379"/>
        <dbReference type="ChEBI" id="CHEBI:16526"/>
        <dbReference type="ChEBI" id="CHEBI:57307"/>
        <dbReference type="ChEBI" id="CHEBI:57309"/>
        <dbReference type="EC" id="1.3.3.3"/>
    </reaction>
</comment>
<comment type="cofactor">
    <cofactor evidence="1">
        <name>a divalent metal cation</name>
        <dbReference type="ChEBI" id="CHEBI:60240"/>
    </cofactor>
</comment>
<comment type="pathway">
    <text evidence="1">Porphyrin-containing compound metabolism; protoporphyrin-IX biosynthesis; protoporphyrinogen-IX from coproporphyrinogen-III (O2 route): step 1/1.</text>
</comment>
<comment type="subunit">
    <text evidence="1">Homodimer.</text>
</comment>
<comment type="subcellular location">
    <subcellularLocation>
        <location evidence="1">Cytoplasm</location>
    </subcellularLocation>
</comment>
<comment type="similarity">
    <text evidence="1">Belongs to the aerobic coproporphyrinogen-III oxidase family.</text>
</comment>
<name>HEM6_PARXL</name>
<gene>
    <name evidence="1" type="primary">hemF</name>
    <name type="ordered locus">Bxeno_A1183</name>
    <name type="ORF">Bxe_A3261</name>
</gene>
<reference key="1">
    <citation type="journal article" date="2006" name="Proc. Natl. Acad. Sci. U.S.A.">
        <title>Burkholderia xenovorans LB400 harbors a multi-replicon, 9.73-Mbp genome shaped for versatility.</title>
        <authorList>
            <person name="Chain P.S.G."/>
            <person name="Denef V.J."/>
            <person name="Konstantinidis K.T."/>
            <person name="Vergez L.M."/>
            <person name="Agullo L."/>
            <person name="Reyes V.L."/>
            <person name="Hauser L."/>
            <person name="Cordova M."/>
            <person name="Gomez L."/>
            <person name="Gonzalez M."/>
            <person name="Land M."/>
            <person name="Lao V."/>
            <person name="Larimer F."/>
            <person name="LiPuma J.J."/>
            <person name="Mahenthiralingam E."/>
            <person name="Malfatti S.A."/>
            <person name="Marx C.J."/>
            <person name="Parnell J.J."/>
            <person name="Ramette A."/>
            <person name="Richardson P."/>
            <person name="Seeger M."/>
            <person name="Smith D."/>
            <person name="Spilker T."/>
            <person name="Sul W.J."/>
            <person name="Tsoi T.V."/>
            <person name="Ulrich L.E."/>
            <person name="Zhulin I.B."/>
            <person name="Tiedje J.M."/>
        </authorList>
    </citation>
    <scope>NUCLEOTIDE SEQUENCE [LARGE SCALE GENOMIC DNA]</scope>
    <source>
        <strain>LB400</strain>
    </source>
</reference>
<proteinExistence type="inferred from homology"/>
<organism>
    <name type="scientific">Paraburkholderia xenovorans (strain LB400)</name>
    <dbReference type="NCBI Taxonomy" id="266265"/>
    <lineage>
        <taxon>Bacteria</taxon>
        <taxon>Pseudomonadati</taxon>
        <taxon>Pseudomonadota</taxon>
        <taxon>Betaproteobacteria</taxon>
        <taxon>Burkholderiales</taxon>
        <taxon>Burkholderiaceae</taxon>
        <taxon>Paraburkholderia</taxon>
    </lineage>
</organism>
<keyword id="KW-0963">Cytoplasm</keyword>
<keyword id="KW-0350">Heme biosynthesis</keyword>
<keyword id="KW-0479">Metal-binding</keyword>
<keyword id="KW-0560">Oxidoreductase</keyword>
<keyword id="KW-0627">Porphyrin biosynthesis</keyword>
<keyword id="KW-1185">Reference proteome</keyword>
<evidence type="ECO:0000255" key="1">
    <source>
        <dbReference type="HAMAP-Rule" id="MF_00333"/>
    </source>
</evidence>
<sequence length="307" mass="34593">MTDSSYDAQAVRSWLQGLQTQIADTLGAFDGTPFATDAWQRAPGEKLRGGGYTRILEGGNFFERAGIGFSDVAGDALPASASAARPQLAGRGFEAMGVSLVLHPHNPHCPTVHMNVRLLIATKAGEEPVFWFGGGMDLTPFYGYEEDAQHFHRTCRDALQPYGADLYPSFKRWCDEYFFLRHRNEPRGIGGIFFDDFSAPGFDQSFAMLRSVGDAFLKAYLPIIEKRRNIPYGQAERDFQAYRRGRYVEFNLVFDRGTLFGLQSGGRTESILMSMPPVVNWRYNWQPEPGTPEARLYSDFLVPREWV</sequence>